<proteinExistence type="inferred from homology"/>
<comment type="function">
    <text evidence="1">Plays a central role in chromosome condensation, segregation and cell cycle progression. Functions as a homodimer, which is essential for chromosome partition. Involved in negative DNA supercoiling in vivo, and by this means organize and compact chromosomes. May achieve or facilitate chromosome segregation by condensation DNA from both sides of a centrally located replisome during cell division.</text>
</comment>
<comment type="subunit">
    <text evidence="1">Homodimerization via its hinge domain. Binds to DNA via its C-terminal region. Interacts, and probably forms a ternary complex, with MukE and MukF via its C-terminal region. The complex formation is stimulated by calcium or magnesium. Interacts with tubulin-related protein FtsZ.</text>
</comment>
<comment type="subcellular location">
    <subcellularLocation>
        <location evidence="1">Cytoplasm</location>
        <location evidence="1">Nucleoid</location>
    </subcellularLocation>
    <text evidence="1">Restricted to the nucleoid region.</text>
</comment>
<comment type="domain">
    <text evidence="1">The hinge domain, which separates the large intramolecular coiled coil regions, allows the homodimerization, forming a V-shaped homodimer.</text>
</comment>
<comment type="similarity">
    <text evidence="1">Belongs to the SMC family. MukB subfamily.</text>
</comment>
<gene>
    <name evidence="1" type="primary">mukB</name>
    <name type="ordered locus">SDY_2334</name>
</gene>
<reference key="1">
    <citation type="journal article" date="2005" name="Nucleic Acids Res.">
        <title>Genome dynamics and diversity of Shigella species, the etiologic agents of bacillary dysentery.</title>
        <authorList>
            <person name="Yang F."/>
            <person name="Yang J."/>
            <person name="Zhang X."/>
            <person name="Chen L."/>
            <person name="Jiang Y."/>
            <person name="Yan Y."/>
            <person name="Tang X."/>
            <person name="Wang J."/>
            <person name="Xiong Z."/>
            <person name="Dong J."/>
            <person name="Xue Y."/>
            <person name="Zhu Y."/>
            <person name="Xu X."/>
            <person name="Sun L."/>
            <person name="Chen S."/>
            <person name="Nie H."/>
            <person name="Peng J."/>
            <person name="Xu J."/>
            <person name="Wang Y."/>
            <person name="Yuan Z."/>
            <person name="Wen Y."/>
            <person name="Yao Z."/>
            <person name="Shen Y."/>
            <person name="Qiang B."/>
            <person name="Hou Y."/>
            <person name="Yu J."/>
            <person name="Jin Q."/>
        </authorList>
    </citation>
    <scope>NUCLEOTIDE SEQUENCE [LARGE SCALE GENOMIC DNA]</scope>
    <source>
        <strain>Sd197</strain>
    </source>
</reference>
<evidence type="ECO:0000255" key="1">
    <source>
        <dbReference type="HAMAP-Rule" id="MF_01800"/>
    </source>
</evidence>
<dbReference type="EMBL" id="CP000034">
    <property type="protein sequence ID" value="ABB62411.1"/>
    <property type="molecule type" value="Genomic_DNA"/>
</dbReference>
<dbReference type="RefSeq" id="WP_000572767.1">
    <property type="nucleotide sequence ID" value="NC_007606.1"/>
</dbReference>
<dbReference type="RefSeq" id="YP_403902.1">
    <property type="nucleotide sequence ID" value="NC_007606.1"/>
</dbReference>
<dbReference type="SMR" id="Q32E44"/>
<dbReference type="STRING" id="300267.SDY_2334"/>
<dbReference type="EnsemblBacteria" id="ABB62411">
    <property type="protein sequence ID" value="ABB62411"/>
    <property type="gene ID" value="SDY_2334"/>
</dbReference>
<dbReference type="KEGG" id="sdy:SDY_2334"/>
<dbReference type="PATRIC" id="fig|300267.13.peg.2818"/>
<dbReference type="HOGENOM" id="CLU_004430_0_0_6"/>
<dbReference type="Proteomes" id="UP000002716">
    <property type="component" value="Chromosome"/>
</dbReference>
<dbReference type="GO" id="GO:0005737">
    <property type="term" value="C:cytoplasm"/>
    <property type="evidence" value="ECO:0007669"/>
    <property type="project" value="UniProtKB-UniRule"/>
</dbReference>
<dbReference type="GO" id="GO:0009295">
    <property type="term" value="C:nucleoid"/>
    <property type="evidence" value="ECO:0007669"/>
    <property type="project" value="UniProtKB-SubCell"/>
</dbReference>
<dbReference type="GO" id="GO:0005524">
    <property type="term" value="F:ATP binding"/>
    <property type="evidence" value="ECO:0007669"/>
    <property type="project" value="UniProtKB-UniRule"/>
</dbReference>
<dbReference type="GO" id="GO:0003677">
    <property type="term" value="F:DNA binding"/>
    <property type="evidence" value="ECO:0007669"/>
    <property type="project" value="UniProtKB-UniRule"/>
</dbReference>
<dbReference type="GO" id="GO:0051301">
    <property type="term" value="P:cell division"/>
    <property type="evidence" value="ECO:0007669"/>
    <property type="project" value="UniProtKB-KW"/>
</dbReference>
<dbReference type="GO" id="GO:0030261">
    <property type="term" value="P:chromosome condensation"/>
    <property type="evidence" value="ECO:0007669"/>
    <property type="project" value="UniProtKB-KW"/>
</dbReference>
<dbReference type="GO" id="GO:0007059">
    <property type="term" value="P:chromosome segregation"/>
    <property type="evidence" value="ECO:0007669"/>
    <property type="project" value="UniProtKB-UniRule"/>
</dbReference>
<dbReference type="GO" id="GO:0006260">
    <property type="term" value="P:DNA replication"/>
    <property type="evidence" value="ECO:0007669"/>
    <property type="project" value="UniProtKB-UniRule"/>
</dbReference>
<dbReference type="FunFam" id="3.30.70.3500:FF:000001">
    <property type="entry name" value="Chromosome partition protein MukB"/>
    <property type="match status" value="1"/>
</dbReference>
<dbReference type="FunFam" id="3.40.1140.10:FF:000001">
    <property type="entry name" value="Chromosome partition protein MukB"/>
    <property type="match status" value="1"/>
</dbReference>
<dbReference type="FunFam" id="3.40.1140.10:FF:000002">
    <property type="entry name" value="Chromosome partition protein MukB"/>
    <property type="match status" value="1"/>
</dbReference>
<dbReference type="Gene3D" id="1.20.58.850">
    <property type="match status" value="1"/>
</dbReference>
<dbReference type="Gene3D" id="3.40.1140.10">
    <property type="match status" value="2"/>
</dbReference>
<dbReference type="Gene3D" id="1.20.5.420">
    <property type="entry name" value="Immunoglobulin FC, subunit C"/>
    <property type="match status" value="1"/>
</dbReference>
<dbReference type="Gene3D" id="3.30.70.3500">
    <property type="entry name" value="MukB, hinge domain"/>
    <property type="match status" value="1"/>
</dbReference>
<dbReference type="HAMAP" id="MF_01800">
    <property type="entry name" value="MukB"/>
    <property type="match status" value="1"/>
</dbReference>
<dbReference type="InterPro" id="IPR012090">
    <property type="entry name" value="MukB"/>
</dbReference>
<dbReference type="InterPro" id="IPR050308">
    <property type="entry name" value="MukB/SMC"/>
</dbReference>
<dbReference type="InterPro" id="IPR032520">
    <property type="entry name" value="MukB_hinge"/>
</dbReference>
<dbReference type="InterPro" id="IPR042501">
    <property type="entry name" value="MukB_hinge_sf"/>
</dbReference>
<dbReference type="InterPro" id="IPR007406">
    <property type="entry name" value="MukB_N_dom"/>
</dbReference>
<dbReference type="InterPro" id="IPR027417">
    <property type="entry name" value="P-loop_NTPase"/>
</dbReference>
<dbReference type="NCBIfam" id="NF003422">
    <property type="entry name" value="PRK04863.1"/>
    <property type="match status" value="1"/>
</dbReference>
<dbReference type="PANTHER" id="PTHR42963">
    <property type="entry name" value="CHROMOSOME PARTITION PROTEIN MUKB"/>
    <property type="match status" value="1"/>
</dbReference>
<dbReference type="PANTHER" id="PTHR42963:SF1">
    <property type="entry name" value="DUF4476 DOMAIN-CONTAINING PROTEIN"/>
    <property type="match status" value="1"/>
</dbReference>
<dbReference type="Pfam" id="PF04310">
    <property type="entry name" value="MukB"/>
    <property type="match status" value="1"/>
</dbReference>
<dbReference type="Pfam" id="PF16330">
    <property type="entry name" value="MukB_hinge"/>
    <property type="match status" value="1"/>
</dbReference>
<dbReference type="Pfam" id="PF13558">
    <property type="entry name" value="SbcC_Walker_B"/>
    <property type="match status" value="1"/>
</dbReference>
<dbReference type="PIRSF" id="PIRSF005246">
    <property type="entry name" value="MukB"/>
    <property type="match status" value="1"/>
</dbReference>
<dbReference type="SUPFAM" id="SSF52540">
    <property type="entry name" value="P-loop containing nucleoside triphosphate hydrolases"/>
    <property type="match status" value="2"/>
</dbReference>
<protein>
    <recommendedName>
        <fullName evidence="1">Chromosome partition protein MukB</fullName>
    </recommendedName>
    <alternativeName>
        <fullName evidence="1">Structural maintenance of chromosome-related protein</fullName>
    </alternativeName>
</protein>
<name>MUKB_SHIDS</name>
<accession>Q32E44</accession>
<keyword id="KW-0067">ATP-binding</keyword>
<keyword id="KW-0131">Cell cycle</keyword>
<keyword id="KW-0132">Cell division</keyword>
<keyword id="KW-0159">Chromosome partition</keyword>
<keyword id="KW-0175">Coiled coil</keyword>
<keyword id="KW-0963">Cytoplasm</keyword>
<keyword id="KW-0226">DNA condensation</keyword>
<keyword id="KW-0238">DNA-binding</keyword>
<keyword id="KW-0547">Nucleotide-binding</keyword>
<keyword id="KW-1185">Reference proteome</keyword>
<sequence>MIERGKFRSLTLINWNGFFARTFDLDELVTTLSGGNGAGKSTTMAAFVTALIPDLTLLHFRNTTEAGATSGSRDKGLHGKLKVGVCYSMLDTINSRHQRVVVGVRLQQVAGRDRKVDIKPFAIQGLPMSVQPTQLVTETLNERQARVLPLNELKDKLEAMEGVQFKQFNSITDYHSLMFDLGIIARRLRSASDRSKFYRLIEASLYGGISSAITRSLRDYLLPENSGVRKAFQDMEAALRENRMTLEAIRVTQSDRDLFKHLISEATNYVAADYMRHANERRVHLDKALEFRRELYTSRQQLAAEQYKHVDMARELAEHNGAEGDLEADYQAASDHLNLVQTALRQQEKIERYEADLDELQIRLEEQNEVVAEAIERQEENEARAEAAELEVDELKSQLADYQQALDVQQTRAIQYNQAIAALNRAKELCHLPDLTADSAAEWLETFQAKELEATEKMLSLEQKMSMAQTAHSQFEQAYQLVVAINGPLARNEAWDVARELLREGVEQRHLAEQVQPLRMRLSELEQRLREQQEAERLLADFCKRQGKNFDIDELEALHQELEARIASLSDSVSNAREERMALCQEQEQLQSRIQSLMQRAPVWLAAQNSLNQLSEQCGEEFSSSQDVTEYLQQLLEREREAIVERDEVGARKNAVDEEIERLSQPGGSEDQRLNALAERFGGVLLSEIYDDVSLEDAPYFSALYGPSRHAIVVPDLSQVTEHLEGLTDCPEDLYLIEGDPQSFDDSVFSVDELEKAVVVKIADRQWRYSRFPEVPLFGRAACESRIESLHAEREVLSERFATLSFDVQKTQRLHQAFSRFIGSHLAVAFESDPEPEIRQLNSRRVELERALSNHENDNQQQRIQFEQAKEGVTALNRILPRLNLLADDSLADRVDEIRERLDEAQEAARFVQQFGNQLAKLEPIVSVLQSDPEQFEQLKEDYAYSQQMQRDARQQAFALTEVVQRRAHFSYSDSAEMLSGNSDLNEKLRERLEQAEAERTRAREALRGHAAQLSQYNQVLASLKSSYDTKKELLNDLQRELQDIGVRADSGAEERARIRRDELHAQLSNNRSRRNQLEKALTFCEAEMDNLTRKLRRLERDYFEMREQVVTAKAGWCAVMRMVKDNGVERRLHRRELAYLSADDLRSMSDKALGALRLAVADNEHLRDVLRMSEDPKRPERKIQFFVAVYQHLRERIRQDIIRTDDPVEAIEQMEIELSRLTEELTSREQKLAISSRSVANIIRKTIQREQNRIRILNQGLQNVSFGQVNSVRLNVNVRETHAMLLDVLSEQHEQHQDLFNSNRLTFSEALAKLYQRLNPQIDMGQRTPQTIGEELLDYRNYLEMEVEVNRGSDGWLRAESGALSTGEAIGTGMSILVMVVQSWEDESRRLRGKDISPCRLLFLDEAARLDARSIATLFELCERLQMQLIIAAPENISPEKGTTYKLVRKVFQNTEHVHVVGLRGFAPQLPETLPGSDEAPS</sequence>
<organism>
    <name type="scientific">Shigella dysenteriae serotype 1 (strain Sd197)</name>
    <dbReference type="NCBI Taxonomy" id="300267"/>
    <lineage>
        <taxon>Bacteria</taxon>
        <taxon>Pseudomonadati</taxon>
        <taxon>Pseudomonadota</taxon>
        <taxon>Gammaproteobacteria</taxon>
        <taxon>Enterobacterales</taxon>
        <taxon>Enterobacteriaceae</taxon>
        <taxon>Shigella</taxon>
    </lineage>
</organism>
<feature type="chain" id="PRO_1000069913" description="Chromosome partition protein MukB">
    <location>
        <begin position="1"/>
        <end position="1483"/>
    </location>
</feature>
<feature type="region of interest" description="Flexible hinge" evidence="1">
    <location>
        <begin position="666"/>
        <end position="783"/>
    </location>
</feature>
<feature type="coiled-coil region" evidence="1">
    <location>
        <begin position="326"/>
        <end position="418"/>
    </location>
</feature>
<feature type="coiled-coil region" evidence="1">
    <location>
        <begin position="444"/>
        <end position="480"/>
    </location>
</feature>
<feature type="coiled-coil region" evidence="1">
    <location>
        <begin position="509"/>
        <end position="601"/>
    </location>
</feature>
<feature type="coiled-coil region" evidence="1">
    <location>
        <begin position="780"/>
        <end position="804"/>
    </location>
</feature>
<feature type="coiled-coil region" evidence="1">
    <location>
        <begin position="837"/>
        <end position="923"/>
    </location>
</feature>
<feature type="coiled-coil region" evidence="1">
    <location>
        <begin position="977"/>
        <end position="1115"/>
    </location>
</feature>
<feature type="coiled-coil region" evidence="1">
    <location>
        <begin position="1209"/>
        <end position="1265"/>
    </location>
</feature>
<feature type="binding site" evidence="1">
    <location>
        <begin position="34"/>
        <end position="41"/>
    </location>
    <ligand>
        <name>ATP</name>
        <dbReference type="ChEBI" id="CHEBI:30616"/>
    </ligand>
</feature>